<reference key="1">
    <citation type="submission" date="2006-12" db="EMBL/GenBank/DDBJ databases">
        <title>Bifidobacterium adolescentis complete genome sequence.</title>
        <authorList>
            <person name="Suzuki T."/>
            <person name="Tsuda Y."/>
            <person name="Kanou N."/>
            <person name="Inoue T."/>
            <person name="Kumazaki K."/>
            <person name="Nagano S."/>
            <person name="Hirai S."/>
            <person name="Tanaka K."/>
            <person name="Watanabe K."/>
        </authorList>
    </citation>
    <scope>NUCLEOTIDE SEQUENCE [LARGE SCALE GENOMIC DNA]</scope>
    <source>
        <strain>ATCC 15703 / DSM 20083 / NCTC 11814 / E194a</strain>
    </source>
</reference>
<comment type="function">
    <text evidence="1">Catalyzes the conversion of L-arabinose to L-ribulose.</text>
</comment>
<comment type="catalytic activity">
    <reaction evidence="1">
        <text>beta-L-arabinopyranose = L-ribulose</text>
        <dbReference type="Rhea" id="RHEA:14821"/>
        <dbReference type="ChEBI" id="CHEBI:16880"/>
        <dbReference type="ChEBI" id="CHEBI:40886"/>
        <dbReference type="EC" id="5.3.1.4"/>
    </reaction>
</comment>
<comment type="cofactor">
    <cofactor evidence="1">
        <name>Mn(2+)</name>
        <dbReference type="ChEBI" id="CHEBI:29035"/>
    </cofactor>
    <text evidence="1">Binds 1 Mn(2+) ion per subunit.</text>
</comment>
<comment type="pathway">
    <text evidence="1">Carbohydrate degradation; L-arabinose degradation via L-ribulose; D-xylulose 5-phosphate from L-arabinose (bacterial route): step 1/3.</text>
</comment>
<comment type="similarity">
    <text evidence="1">Belongs to the arabinose isomerase family.</text>
</comment>
<protein>
    <recommendedName>
        <fullName evidence="1">L-arabinose isomerase</fullName>
        <ecNumber evidence="1">5.3.1.4</ecNumber>
    </recommendedName>
</protein>
<proteinExistence type="inferred from homology"/>
<gene>
    <name evidence="1" type="primary">araA</name>
    <name type="ordered locus">BAD_1410</name>
</gene>
<dbReference type="EC" id="5.3.1.4" evidence="1"/>
<dbReference type="EMBL" id="AP009256">
    <property type="protein sequence ID" value="BAF40191.1"/>
    <property type="molecule type" value="Genomic_DNA"/>
</dbReference>
<dbReference type="RefSeq" id="WP_003809815.1">
    <property type="nucleotide sequence ID" value="NZ_CAXVKE010000002.1"/>
</dbReference>
<dbReference type="SMR" id="A1A3A8"/>
<dbReference type="STRING" id="367928.BAD_1410"/>
<dbReference type="PaxDb" id="1680-BADO_1621"/>
<dbReference type="GeneID" id="4557387"/>
<dbReference type="KEGG" id="bad:BAD_1410"/>
<dbReference type="HOGENOM" id="CLU_045663_0_0_11"/>
<dbReference type="UniPathway" id="UPA00145">
    <property type="reaction ID" value="UER00565"/>
</dbReference>
<dbReference type="Proteomes" id="UP000008702">
    <property type="component" value="Chromosome"/>
</dbReference>
<dbReference type="GO" id="GO:0005829">
    <property type="term" value="C:cytosol"/>
    <property type="evidence" value="ECO:0007669"/>
    <property type="project" value="TreeGrafter"/>
</dbReference>
<dbReference type="GO" id="GO:0008733">
    <property type="term" value="F:L-arabinose isomerase activity"/>
    <property type="evidence" value="ECO:0007669"/>
    <property type="project" value="UniProtKB-UniRule"/>
</dbReference>
<dbReference type="GO" id="GO:0030145">
    <property type="term" value="F:manganese ion binding"/>
    <property type="evidence" value="ECO:0007669"/>
    <property type="project" value="UniProtKB-UniRule"/>
</dbReference>
<dbReference type="GO" id="GO:0019569">
    <property type="term" value="P:L-arabinose catabolic process to xylulose 5-phosphate"/>
    <property type="evidence" value="ECO:0007669"/>
    <property type="project" value="UniProtKB-UniRule"/>
</dbReference>
<dbReference type="Gene3D" id="3.40.50.10940">
    <property type="match status" value="1"/>
</dbReference>
<dbReference type="HAMAP" id="MF_00519">
    <property type="entry name" value="Arabinose_Isome"/>
    <property type="match status" value="1"/>
</dbReference>
<dbReference type="InterPro" id="IPR024664">
    <property type="entry name" value="Ara_Isoase_C"/>
</dbReference>
<dbReference type="InterPro" id="IPR055390">
    <property type="entry name" value="AraA_central"/>
</dbReference>
<dbReference type="InterPro" id="IPR055389">
    <property type="entry name" value="AraA_N"/>
</dbReference>
<dbReference type="InterPro" id="IPR038583">
    <property type="entry name" value="AraA_N_sf"/>
</dbReference>
<dbReference type="InterPro" id="IPR004216">
    <property type="entry name" value="Fuc/Ara_isomerase_C"/>
</dbReference>
<dbReference type="InterPro" id="IPR009015">
    <property type="entry name" value="Fucose_isomerase_N/cen_sf"/>
</dbReference>
<dbReference type="InterPro" id="IPR003762">
    <property type="entry name" value="Lara_isomerase"/>
</dbReference>
<dbReference type="NCBIfam" id="NF002795">
    <property type="entry name" value="PRK02929.1"/>
    <property type="match status" value="1"/>
</dbReference>
<dbReference type="PANTHER" id="PTHR38464">
    <property type="entry name" value="L-ARABINOSE ISOMERASE"/>
    <property type="match status" value="1"/>
</dbReference>
<dbReference type="PANTHER" id="PTHR38464:SF1">
    <property type="entry name" value="L-ARABINOSE ISOMERASE"/>
    <property type="match status" value="1"/>
</dbReference>
<dbReference type="Pfam" id="PF24856">
    <property type="entry name" value="AraA_central"/>
    <property type="match status" value="1"/>
</dbReference>
<dbReference type="Pfam" id="PF02610">
    <property type="entry name" value="AraA_N"/>
    <property type="match status" value="1"/>
</dbReference>
<dbReference type="Pfam" id="PF11762">
    <property type="entry name" value="Arabinose_Iso_C"/>
    <property type="match status" value="1"/>
</dbReference>
<dbReference type="PIRSF" id="PIRSF001478">
    <property type="entry name" value="L-ara_isomerase"/>
    <property type="match status" value="1"/>
</dbReference>
<dbReference type="SUPFAM" id="SSF50443">
    <property type="entry name" value="FucI/AraA C-terminal domain-like"/>
    <property type="match status" value="1"/>
</dbReference>
<dbReference type="SUPFAM" id="SSF53743">
    <property type="entry name" value="FucI/AraA N-terminal and middle domains"/>
    <property type="match status" value="1"/>
</dbReference>
<organism>
    <name type="scientific">Bifidobacterium adolescentis (strain ATCC 15703 / DSM 20083 / NCTC 11814 / E194a)</name>
    <dbReference type="NCBI Taxonomy" id="367928"/>
    <lineage>
        <taxon>Bacteria</taxon>
        <taxon>Bacillati</taxon>
        <taxon>Actinomycetota</taxon>
        <taxon>Actinomycetes</taxon>
        <taxon>Bifidobacteriales</taxon>
        <taxon>Bifidobacteriaceae</taxon>
        <taxon>Bifidobacterium</taxon>
    </lineage>
</organism>
<keyword id="KW-0054">Arabinose catabolism</keyword>
<keyword id="KW-0119">Carbohydrate metabolism</keyword>
<keyword id="KW-0413">Isomerase</keyword>
<keyword id="KW-0464">Manganese</keyword>
<keyword id="KW-0479">Metal-binding</keyword>
<keyword id="KW-1185">Reference proteome</keyword>
<evidence type="ECO:0000255" key="1">
    <source>
        <dbReference type="HAMAP-Rule" id="MF_00519"/>
    </source>
</evidence>
<sequence length="504" mass="55884">MAMENPFEGKEIWFGVGSQDLYGEEALRQVAQQTGEMVDFLNATGKIPAKIVLKPTLKSSDGVKAFMTEASANPNVIGVITWCHTFSPAKMWIRGLEVLTKPLLQLATQHHKEIPWETIDMDFMNLNQAAHGDREFGYIVSRLGIPRKIVVGHYTDPEVAEKVGTWARACAGWDASQNMKVMRWGDNMRNVAVTEGDKTEAERVFGASINTWAVNDLVAAYEKVKDSQVKDLIEDYKAKYDVAPELLDSRYDELFIAAKEEAAMVNMMRENGCTAGVDNFEDLGTLPQLPGVGPQRFPSEYGWGFSAEGDWKTSVLVRIGAVMGYGLEGGASLMEDYSYNFVPGNEFDMGSHMLEVSPSIGTIAKPKLAIYPLGIGGKSDPVRLVFSGKPADAVVVSMADERERFRLLMDEVTIVEPQGSLKNLPCARAVWKPKPDLKTAVQCWITAGGSHHTCMTTSVGREAWEDFARIAGVELAVIDENTNARQFEKELELSEMYHRLNNRH</sequence>
<name>ARAA_BIFAA</name>
<feature type="chain" id="PRO_0000312603" description="L-arabinose isomerase">
    <location>
        <begin position="1"/>
        <end position="504"/>
    </location>
</feature>
<feature type="binding site" evidence="1">
    <location>
        <position position="308"/>
    </location>
    <ligand>
        <name>Mn(2+)</name>
        <dbReference type="ChEBI" id="CHEBI:29035"/>
    </ligand>
</feature>
<feature type="binding site" evidence="1">
    <location>
        <position position="335"/>
    </location>
    <ligand>
        <name>Mn(2+)</name>
        <dbReference type="ChEBI" id="CHEBI:29035"/>
    </ligand>
</feature>
<feature type="binding site" evidence="1">
    <location>
        <position position="352"/>
    </location>
    <ligand>
        <name>Mn(2+)</name>
        <dbReference type="ChEBI" id="CHEBI:29035"/>
    </ligand>
</feature>
<feature type="binding site" evidence="1">
    <location>
        <position position="452"/>
    </location>
    <ligand>
        <name>Mn(2+)</name>
        <dbReference type="ChEBI" id="CHEBI:29035"/>
    </ligand>
</feature>
<accession>A1A3A8</accession>